<dbReference type="EMBL" id="AE016826">
    <property type="protein sequence ID" value="AAO27238.1"/>
    <property type="molecule type" value="Genomic_DNA"/>
</dbReference>
<dbReference type="RefSeq" id="WP_011091639.1">
    <property type="nucleotide sequence ID" value="NC_004545.1"/>
</dbReference>
<dbReference type="SMR" id="P59527"/>
<dbReference type="STRING" id="224915.bbp_539"/>
<dbReference type="KEGG" id="bab:bbp_539"/>
<dbReference type="eggNOG" id="COG3118">
    <property type="taxonomic scope" value="Bacteria"/>
</dbReference>
<dbReference type="HOGENOM" id="CLU_090389_10_2_6"/>
<dbReference type="OrthoDB" id="9790390at2"/>
<dbReference type="Proteomes" id="UP000000601">
    <property type="component" value="Chromosome"/>
</dbReference>
<dbReference type="GO" id="GO:0005829">
    <property type="term" value="C:cytosol"/>
    <property type="evidence" value="ECO:0007669"/>
    <property type="project" value="TreeGrafter"/>
</dbReference>
<dbReference type="GO" id="GO:0015035">
    <property type="term" value="F:protein-disulfide reductase activity"/>
    <property type="evidence" value="ECO:0007669"/>
    <property type="project" value="InterPro"/>
</dbReference>
<dbReference type="GO" id="GO:0045454">
    <property type="term" value="P:cell redox homeostasis"/>
    <property type="evidence" value="ECO:0007669"/>
    <property type="project" value="TreeGrafter"/>
</dbReference>
<dbReference type="CDD" id="cd02947">
    <property type="entry name" value="TRX_family"/>
    <property type="match status" value="1"/>
</dbReference>
<dbReference type="FunFam" id="3.40.30.10:FF:000001">
    <property type="entry name" value="Thioredoxin"/>
    <property type="match status" value="1"/>
</dbReference>
<dbReference type="Gene3D" id="3.40.30.10">
    <property type="entry name" value="Glutaredoxin"/>
    <property type="match status" value="1"/>
</dbReference>
<dbReference type="InterPro" id="IPR005746">
    <property type="entry name" value="Thioredoxin"/>
</dbReference>
<dbReference type="InterPro" id="IPR036249">
    <property type="entry name" value="Thioredoxin-like_sf"/>
</dbReference>
<dbReference type="InterPro" id="IPR013766">
    <property type="entry name" value="Thioredoxin_domain"/>
</dbReference>
<dbReference type="NCBIfam" id="NF006898">
    <property type="entry name" value="PRK09381.1"/>
    <property type="match status" value="1"/>
</dbReference>
<dbReference type="NCBIfam" id="TIGR01068">
    <property type="entry name" value="thioredoxin"/>
    <property type="match status" value="1"/>
</dbReference>
<dbReference type="PANTHER" id="PTHR45663">
    <property type="entry name" value="GEO12009P1"/>
    <property type="match status" value="1"/>
</dbReference>
<dbReference type="PANTHER" id="PTHR45663:SF11">
    <property type="entry name" value="GEO12009P1"/>
    <property type="match status" value="1"/>
</dbReference>
<dbReference type="Pfam" id="PF00085">
    <property type="entry name" value="Thioredoxin"/>
    <property type="match status" value="1"/>
</dbReference>
<dbReference type="PIRSF" id="PIRSF000077">
    <property type="entry name" value="Thioredoxin"/>
    <property type="match status" value="1"/>
</dbReference>
<dbReference type="PRINTS" id="PR00421">
    <property type="entry name" value="THIOREDOXIN"/>
</dbReference>
<dbReference type="SUPFAM" id="SSF52833">
    <property type="entry name" value="Thioredoxin-like"/>
    <property type="match status" value="1"/>
</dbReference>
<dbReference type="PROSITE" id="PS51352">
    <property type="entry name" value="THIOREDOXIN_2"/>
    <property type="match status" value="1"/>
</dbReference>
<protein>
    <recommendedName>
        <fullName>Thioredoxin</fullName>
        <shortName>Trx</shortName>
    </recommendedName>
</protein>
<evidence type="ECO:0000255" key="1">
    <source>
        <dbReference type="PROSITE-ProRule" id="PRU00691"/>
    </source>
</evidence>
<evidence type="ECO:0000305" key="2"/>
<feature type="chain" id="PRO_0000120080" description="Thioredoxin">
    <location>
        <begin position="1"/>
        <end position="109"/>
    </location>
</feature>
<feature type="domain" description="Thioredoxin" evidence="1">
    <location>
        <begin position="2"/>
        <end position="109"/>
    </location>
</feature>
<feature type="disulfide bond" description="Redox-active" evidence="1">
    <location>
        <begin position="33"/>
        <end position="36"/>
    </location>
</feature>
<sequence length="109" mass="12396">MTNCIVELTDGIFKQYILESKKAVLVDFWAEWCNPCKILAPILEDIAKEYEHKLIVTKINIDKNPNTAPKYSIRGIPALLLFKNSELVGTKVGALSKVQLKDFLNLYLK</sequence>
<comment type="function">
    <text>Participates in various redox reactions through the reversible oxidation of its active center dithiol to a disulfide and catalyzes dithiol-disulfide exchange reactions.</text>
</comment>
<comment type="similarity">
    <text evidence="2">Belongs to the thioredoxin family.</text>
</comment>
<proteinExistence type="inferred from homology"/>
<organism>
    <name type="scientific">Buchnera aphidicola subsp. Baizongia pistaciae (strain Bp)</name>
    <dbReference type="NCBI Taxonomy" id="224915"/>
    <lineage>
        <taxon>Bacteria</taxon>
        <taxon>Pseudomonadati</taxon>
        <taxon>Pseudomonadota</taxon>
        <taxon>Gammaproteobacteria</taxon>
        <taxon>Enterobacterales</taxon>
        <taxon>Erwiniaceae</taxon>
        <taxon>Buchnera</taxon>
    </lineage>
</organism>
<name>THIO_BUCBP</name>
<gene>
    <name type="primary">trxA</name>
    <name type="ordered locus">bbp_539</name>
</gene>
<keyword id="KW-1015">Disulfide bond</keyword>
<keyword id="KW-0249">Electron transport</keyword>
<keyword id="KW-0676">Redox-active center</keyword>
<keyword id="KW-1185">Reference proteome</keyword>
<keyword id="KW-0813">Transport</keyword>
<accession>P59527</accession>
<reference key="1">
    <citation type="journal article" date="2003" name="Proc. Natl. Acad. Sci. U.S.A.">
        <title>Reductive genome evolution in Buchnera aphidicola.</title>
        <authorList>
            <person name="van Ham R.C.H.J."/>
            <person name="Kamerbeek J."/>
            <person name="Palacios C."/>
            <person name="Rausell C."/>
            <person name="Abascal F."/>
            <person name="Bastolla U."/>
            <person name="Fernandez J.M."/>
            <person name="Jimenez L."/>
            <person name="Postigo M."/>
            <person name="Silva F.J."/>
            <person name="Tamames J."/>
            <person name="Viguera E."/>
            <person name="Latorre A."/>
            <person name="Valencia A."/>
            <person name="Moran F."/>
            <person name="Moya A."/>
        </authorList>
    </citation>
    <scope>NUCLEOTIDE SEQUENCE [LARGE SCALE GENOMIC DNA]</scope>
    <source>
        <strain>Bp</strain>
    </source>
</reference>